<sequence length="909" mass="103811">MLYCGSTGGHYMIMTTNNNSNNNNNNNNNNNNNNNNNNNNNINQNHQHQHQHHHHQQQQQQQQQQQQQQQQQQQQQQQQQQQQQQQNYGESTTSTSMIPPSITTSLTPLTPTLSSQPQNIQQQQQQQHHHQQQHHHHHQQTQQQQQQILSPMMGSKRKLEEDMGVGQPTSNLTNEYLMSNNNSLKPILVSSPLLTPLSASPGLTSMQMAFANASLSAPSTPLSMSPSLGPCSAPMSPSKKSKNSRSSSKSKYQNSEERWQSTTSKDNGKPSSPGIVKGPWKDEEDAKLVELVNKCGPKEWSSIAAKIPGRIGKQCRERWFNHLSPEVRKTNWTPEEDKIIIDAHASLGNKWTAISKMLDGRPANAIKNHWNSTLLKKIGGDSKSLNKEKDDDDDDDEDAEDGSSPVLSPISLYQSSSSTTTTTTTTTTNSSEKSNIPPFALSGSTTTSTNNLNNSTNSTNSINNNNNNNNNNNNSSNTNTAITTNEPLVAPKIIRAQTTPNSSPSLSSKKTHDKQKVPQSPKNSKQQQTQQQTQQQTQQQLQQQQQQQQQQQQQQQQQQQQQHIQQQQMPVISQQPHIQQLPIDQQIQNAQFQQFHLQQPSMPSSTSVNIIPNQSSMEQHHYQQQQQAQQQQHQQQQHQQQQQHQQQQQQQQYLMQQHQQYQQQYQLMQQHYQQQLSQQHHQQQHHPQQAQQHHPQQVQHHQQHINTTHNQHQQQQQQQQQQQQQQTNNSQVNSNNTDTTFSNSHPIEPHEVPYYYDYWGSSTSGSQTLIPSDNTTNTYTIENNNDFLLFDDNQHRIQPLQQHQHIKQEHAQMSHLPYHPTQPNNLNTTTTTTNNNNNNNNNNNNNNNNNNIPTPNMSASTTGTINHHIHQTHHHLTTPLSQSTPSVSTDQNNYINYDISSLFSLPNEI</sequence>
<keyword id="KW-0238">DNA-binding</keyword>
<keyword id="KW-0539">Nucleus</keyword>
<keyword id="KW-1185">Reference proteome</keyword>
<keyword id="KW-0677">Repeat</keyword>
<keyword id="KW-0804">Transcription</keyword>
<keyword id="KW-0805">Transcription regulation</keyword>
<name>MYBQ_DICDI</name>
<accession>Q54HP1</accession>
<protein>
    <recommendedName>
        <fullName>Myb-like protein Q</fullName>
    </recommendedName>
</protein>
<proteinExistence type="inferred from homology"/>
<organism>
    <name type="scientific">Dictyostelium discoideum</name>
    <name type="common">Social amoeba</name>
    <dbReference type="NCBI Taxonomy" id="44689"/>
    <lineage>
        <taxon>Eukaryota</taxon>
        <taxon>Amoebozoa</taxon>
        <taxon>Evosea</taxon>
        <taxon>Eumycetozoa</taxon>
        <taxon>Dictyostelia</taxon>
        <taxon>Dictyosteliales</taxon>
        <taxon>Dictyosteliaceae</taxon>
        <taxon>Dictyostelium</taxon>
    </lineage>
</organism>
<reference key="1">
    <citation type="journal article" date="2005" name="Nature">
        <title>The genome of the social amoeba Dictyostelium discoideum.</title>
        <authorList>
            <person name="Eichinger L."/>
            <person name="Pachebat J.A."/>
            <person name="Gloeckner G."/>
            <person name="Rajandream M.A."/>
            <person name="Sucgang R."/>
            <person name="Berriman M."/>
            <person name="Song J."/>
            <person name="Olsen R."/>
            <person name="Szafranski K."/>
            <person name="Xu Q."/>
            <person name="Tunggal B."/>
            <person name="Kummerfeld S."/>
            <person name="Madera M."/>
            <person name="Konfortov B.A."/>
            <person name="Rivero F."/>
            <person name="Bankier A.T."/>
            <person name="Lehmann R."/>
            <person name="Hamlin N."/>
            <person name="Davies R."/>
            <person name="Gaudet P."/>
            <person name="Fey P."/>
            <person name="Pilcher K."/>
            <person name="Chen G."/>
            <person name="Saunders D."/>
            <person name="Sodergren E.J."/>
            <person name="Davis P."/>
            <person name="Kerhornou A."/>
            <person name="Nie X."/>
            <person name="Hall N."/>
            <person name="Anjard C."/>
            <person name="Hemphill L."/>
            <person name="Bason N."/>
            <person name="Farbrother P."/>
            <person name="Desany B."/>
            <person name="Just E."/>
            <person name="Morio T."/>
            <person name="Rost R."/>
            <person name="Churcher C.M."/>
            <person name="Cooper J."/>
            <person name="Haydock S."/>
            <person name="van Driessche N."/>
            <person name="Cronin A."/>
            <person name="Goodhead I."/>
            <person name="Muzny D.M."/>
            <person name="Mourier T."/>
            <person name="Pain A."/>
            <person name="Lu M."/>
            <person name="Harper D."/>
            <person name="Lindsay R."/>
            <person name="Hauser H."/>
            <person name="James K.D."/>
            <person name="Quiles M."/>
            <person name="Madan Babu M."/>
            <person name="Saito T."/>
            <person name="Buchrieser C."/>
            <person name="Wardroper A."/>
            <person name="Felder M."/>
            <person name="Thangavelu M."/>
            <person name="Johnson D."/>
            <person name="Knights A."/>
            <person name="Loulseged H."/>
            <person name="Mungall K.L."/>
            <person name="Oliver K."/>
            <person name="Price C."/>
            <person name="Quail M.A."/>
            <person name="Urushihara H."/>
            <person name="Hernandez J."/>
            <person name="Rabbinowitsch E."/>
            <person name="Steffen D."/>
            <person name="Sanders M."/>
            <person name="Ma J."/>
            <person name="Kohara Y."/>
            <person name="Sharp S."/>
            <person name="Simmonds M.N."/>
            <person name="Spiegler S."/>
            <person name="Tivey A."/>
            <person name="Sugano S."/>
            <person name="White B."/>
            <person name="Walker D."/>
            <person name="Woodward J.R."/>
            <person name="Winckler T."/>
            <person name="Tanaka Y."/>
            <person name="Shaulsky G."/>
            <person name="Schleicher M."/>
            <person name="Weinstock G.M."/>
            <person name="Rosenthal A."/>
            <person name="Cox E.C."/>
            <person name="Chisholm R.L."/>
            <person name="Gibbs R.A."/>
            <person name="Loomis W.F."/>
            <person name="Platzer M."/>
            <person name="Kay R.R."/>
            <person name="Williams J.G."/>
            <person name="Dear P.H."/>
            <person name="Noegel A.A."/>
            <person name="Barrell B.G."/>
            <person name="Kuspa A."/>
        </authorList>
    </citation>
    <scope>NUCLEOTIDE SEQUENCE [LARGE SCALE GENOMIC DNA]</scope>
    <source>
        <strain>AX4</strain>
    </source>
</reference>
<evidence type="ECO:0000255" key="1">
    <source>
        <dbReference type="PROSITE-ProRule" id="PRU00625"/>
    </source>
</evidence>
<evidence type="ECO:0000256" key="2">
    <source>
        <dbReference type="SAM" id="MobiDB-lite"/>
    </source>
</evidence>
<dbReference type="EMBL" id="AAFI02000138">
    <property type="protein sequence ID" value="EAL62782.1"/>
    <property type="molecule type" value="Genomic_DNA"/>
</dbReference>
<dbReference type="RefSeq" id="XP_636296.1">
    <property type="nucleotide sequence ID" value="XM_631204.1"/>
</dbReference>
<dbReference type="SMR" id="Q54HP1"/>
<dbReference type="FunCoup" id="Q54HP1">
    <property type="interactions" value="849"/>
</dbReference>
<dbReference type="STRING" id="44689.Q54HP1"/>
<dbReference type="PaxDb" id="44689-DDB0216341"/>
<dbReference type="EnsemblProtists" id="EAL62782">
    <property type="protein sequence ID" value="EAL62782"/>
    <property type="gene ID" value="DDB_G0289319"/>
</dbReference>
<dbReference type="GeneID" id="8627079"/>
<dbReference type="KEGG" id="ddi:DDB_G0289319"/>
<dbReference type="dictyBase" id="DDB_G0289319">
    <property type="gene designation" value="mybQ"/>
</dbReference>
<dbReference type="VEuPathDB" id="AmoebaDB:DDB_G0289319"/>
<dbReference type="eggNOG" id="KOG0048">
    <property type="taxonomic scope" value="Eukaryota"/>
</dbReference>
<dbReference type="HOGENOM" id="CLU_319698_0_0_1"/>
<dbReference type="InParanoid" id="Q54HP1"/>
<dbReference type="OMA" id="GPKEWSS"/>
<dbReference type="PRO" id="PR:Q54HP1"/>
<dbReference type="Proteomes" id="UP000002195">
    <property type="component" value="Chromosome 5"/>
</dbReference>
<dbReference type="GO" id="GO:0005634">
    <property type="term" value="C:nucleus"/>
    <property type="evidence" value="ECO:0000318"/>
    <property type="project" value="GO_Central"/>
</dbReference>
<dbReference type="GO" id="GO:0000981">
    <property type="term" value="F:DNA-binding transcription factor activity, RNA polymerase II-specific"/>
    <property type="evidence" value="ECO:0000318"/>
    <property type="project" value="GO_Central"/>
</dbReference>
<dbReference type="GO" id="GO:0000978">
    <property type="term" value="F:RNA polymerase II cis-regulatory region sequence-specific DNA binding"/>
    <property type="evidence" value="ECO:0000318"/>
    <property type="project" value="GO_Central"/>
</dbReference>
<dbReference type="GO" id="GO:0000278">
    <property type="term" value="P:mitotic cell cycle"/>
    <property type="evidence" value="ECO:0000318"/>
    <property type="project" value="GO_Central"/>
</dbReference>
<dbReference type="GO" id="GO:0045944">
    <property type="term" value="P:positive regulation of transcription by RNA polymerase II"/>
    <property type="evidence" value="ECO:0000318"/>
    <property type="project" value="GO_Central"/>
</dbReference>
<dbReference type="CDD" id="cd00167">
    <property type="entry name" value="SANT"/>
    <property type="match status" value="2"/>
</dbReference>
<dbReference type="FunFam" id="1.10.10.60:FF:000010">
    <property type="entry name" value="Transcriptional activator Myb isoform A"/>
    <property type="match status" value="1"/>
</dbReference>
<dbReference type="Gene3D" id="1.10.10.60">
    <property type="entry name" value="Homeodomain-like"/>
    <property type="match status" value="2"/>
</dbReference>
<dbReference type="InterPro" id="IPR009057">
    <property type="entry name" value="Homeodomain-like_sf"/>
</dbReference>
<dbReference type="InterPro" id="IPR017930">
    <property type="entry name" value="Myb_dom"/>
</dbReference>
<dbReference type="InterPro" id="IPR015495">
    <property type="entry name" value="Myb_TF_plants"/>
</dbReference>
<dbReference type="InterPro" id="IPR001005">
    <property type="entry name" value="SANT/Myb"/>
</dbReference>
<dbReference type="PANTHER" id="PTHR47999:SF124">
    <property type="entry name" value="MYB TRANSCRIPTION FACTOR 42"/>
    <property type="match status" value="1"/>
</dbReference>
<dbReference type="PANTHER" id="PTHR47999">
    <property type="entry name" value="TRANSCRIPTION FACTOR MYB8-RELATED-RELATED"/>
    <property type="match status" value="1"/>
</dbReference>
<dbReference type="Pfam" id="PF00249">
    <property type="entry name" value="Myb_DNA-binding"/>
    <property type="match status" value="2"/>
</dbReference>
<dbReference type="SMART" id="SM00717">
    <property type="entry name" value="SANT"/>
    <property type="match status" value="2"/>
</dbReference>
<dbReference type="SUPFAM" id="SSF46689">
    <property type="entry name" value="Homeodomain-like"/>
    <property type="match status" value="1"/>
</dbReference>
<dbReference type="PROSITE" id="PS51294">
    <property type="entry name" value="HTH_MYB"/>
    <property type="match status" value="2"/>
</dbReference>
<comment type="subcellular location">
    <subcellularLocation>
        <location evidence="1">Nucleus</location>
    </subcellularLocation>
</comment>
<gene>
    <name type="primary">mybQ</name>
    <name type="ORF">DDB_G0289319</name>
</gene>
<feature type="chain" id="PRO_0000329390" description="Myb-like protein Q">
    <location>
        <begin position="1"/>
        <end position="909"/>
    </location>
</feature>
<feature type="domain" description="HTH myb-type 1" evidence="1">
    <location>
        <begin position="272"/>
        <end position="327"/>
    </location>
</feature>
<feature type="domain" description="HTH myb-type 2" evidence="1">
    <location>
        <begin position="328"/>
        <end position="378"/>
    </location>
</feature>
<feature type="DNA-binding region" description="H-T-H motif" evidence="1">
    <location>
        <begin position="300"/>
        <end position="323"/>
    </location>
</feature>
<feature type="DNA-binding region" description="H-T-H motif" evidence="1">
    <location>
        <begin position="351"/>
        <end position="374"/>
    </location>
</feature>
<feature type="region of interest" description="Disordered" evidence="2">
    <location>
        <begin position="15"/>
        <end position="65"/>
    </location>
</feature>
<feature type="region of interest" description="Disordered" evidence="2">
    <location>
        <begin position="84"/>
        <end position="149"/>
    </location>
</feature>
<feature type="region of interest" description="Disordered" evidence="2">
    <location>
        <begin position="216"/>
        <end position="280"/>
    </location>
</feature>
<feature type="region of interest" description="Disordered" evidence="2">
    <location>
        <begin position="379"/>
        <end position="482"/>
    </location>
</feature>
<feature type="region of interest" description="Disordered" evidence="2">
    <location>
        <begin position="497"/>
        <end position="531"/>
    </location>
</feature>
<feature type="region of interest" description="Disordered" evidence="2">
    <location>
        <begin position="616"/>
        <end position="642"/>
    </location>
</feature>
<feature type="region of interest" description="Disordered" evidence="2">
    <location>
        <begin position="672"/>
        <end position="748"/>
    </location>
</feature>
<feature type="region of interest" description="Disordered" evidence="2">
    <location>
        <begin position="826"/>
        <end position="855"/>
    </location>
</feature>
<feature type="compositionally biased region" description="Low complexity" evidence="2">
    <location>
        <begin position="17"/>
        <end position="46"/>
    </location>
</feature>
<feature type="compositionally biased region" description="Basic residues" evidence="2">
    <location>
        <begin position="47"/>
        <end position="56"/>
    </location>
</feature>
<feature type="compositionally biased region" description="Low complexity" evidence="2">
    <location>
        <begin position="84"/>
        <end position="126"/>
    </location>
</feature>
<feature type="compositionally biased region" description="Basic residues" evidence="2">
    <location>
        <begin position="127"/>
        <end position="139"/>
    </location>
</feature>
<feature type="compositionally biased region" description="Polar residues" evidence="2">
    <location>
        <begin position="216"/>
        <end position="226"/>
    </location>
</feature>
<feature type="compositionally biased region" description="Basic and acidic residues" evidence="2">
    <location>
        <begin position="379"/>
        <end position="389"/>
    </location>
</feature>
<feature type="compositionally biased region" description="Acidic residues" evidence="2">
    <location>
        <begin position="390"/>
        <end position="401"/>
    </location>
</feature>
<feature type="compositionally biased region" description="Low complexity" evidence="2">
    <location>
        <begin position="415"/>
        <end position="431"/>
    </location>
</feature>
<feature type="compositionally biased region" description="Low complexity" evidence="2">
    <location>
        <begin position="444"/>
        <end position="482"/>
    </location>
</feature>
<feature type="compositionally biased region" description="Polar residues" evidence="2">
    <location>
        <begin position="497"/>
        <end position="508"/>
    </location>
</feature>
<feature type="compositionally biased region" description="Low complexity" evidence="2">
    <location>
        <begin position="622"/>
        <end position="642"/>
    </location>
</feature>
<feature type="compositionally biased region" description="Low complexity" evidence="2">
    <location>
        <begin position="672"/>
        <end position="726"/>
    </location>
</feature>
<feature type="compositionally biased region" description="Low complexity" evidence="2">
    <location>
        <begin position="733"/>
        <end position="744"/>
    </location>
</feature>
<feature type="compositionally biased region" description="Low complexity" evidence="2">
    <location>
        <begin position="826"/>
        <end position="851"/>
    </location>
</feature>